<organism>
    <name type="scientific">Bordetella pertussis (strain Tohama I / ATCC BAA-589 / NCTC 13251)</name>
    <dbReference type="NCBI Taxonomy" id="257313"/>
    <lineage>
        <taxon>Bacteria</taxon>
        <taxon>Pseudomonadati</taxon>
        <taxon>Pseudomonadota</taxon>
        <taxon>Betaproteobacteria</taxon>
        <taxon>Burkholderiales</taxon>
        <taxon>Alcaligenaceae</taxon>
        <taxon>Bordetella</taxon>
    </lineage>
</organism>
<dbReference type="EMBL" id="BX640413">
    <property type="protein sequence ID" value="CAE41068.1"/>
    <property type="molecule type" value="Genomic_DNA"/>
</dbReference>
<dbReference type="RefSeq" id="NP_879580.1">
    <property type="nucleotide sequence ID" value="NC_002929.2"/>
</dbReference>
<dbReference type="RefSeq" id="WP_010929997.1">
    <property type="nucleotide sequence ID" value="NZ_CP039022.1"/>
</dbReference>
<dbReference type="SMR" id="P0DKX9"/>
<dbReference type="STRING" id="257313.BP0762"/>
<dbReference type="PaxDb" id="257313-BP0762"/>
<dbReference type="GeneID" id="69600714"/>
<dbReference type="KEGG" id="bpe:BP0762"/>
<dbReference type="PATRIC" id="fig|257313.5.peg.815"/>
<dbReference type="eggNOG" id="COG0845">
    <property type="taxonomic scope" value="Bacteria"/>
</dbReference>
<dbReference type="HOGENOM" id="CLU_023976_0_1_4"/>
<dbReference type="Proteomes" id="UP000002676">
    <property type="component" value="Chromosome"/>
</dbReference>
<dbReference type="GO" id="GO:0005886">
    <property type="term" value="C:plasma membrane"/>
    <property type="evidence" value="ECO:0007669"/>
    <property type="project" value="UniProtKB-SubCell"/>
</dbReference>
<dbReference type="GO" id="GO:0031640">
    <property type="term" value="P:killing of cells of another organism"/>
    <property type="evidence" value="ECO:0007669"/>
    <property type="project" value="UniProtKB-KW"/>
</dbReference>
<dbReference type="GO" id="GO:0009306">
    <property type="term" value="P:protein secretion"/>
    <property type="evidence" value="ECO:0007669"/>
    <property type="project" value="InterPro"/>
</dbReference>
<dbReference type="GO" id="GO:0055085">
    <property type="term" value="P:transmembrane transport"/>
    <property type="evidence" value="ECO:0007669"/>
    <property type="project" value="InterPro"/>
</dbReference>
<dbReference type="Gene3D" id="2.40.30.170">
    <property type="match status" value="1"/>
</dbReference>
<dbReference type="Gene3D" id="2.40.50.100">
    <property type="match status" value="1"/>
</dbReference>
<dbReference type="InterPro" id="IPR050739">
    <property type="entry name" value="MFP"/>
</dbReference>
<dbReference type="InterPro" id="IPR006144">
    <property type="entry name" value="Secretion_HlyD_CS"/>
</dbReference>
<dbReference type="InterPro" id="IPR010129">
    <property type="entry name" value="T1SS_HlyD"/>
</dbReference>
<dbReference type="NCBIfam" id="TIGR01843">
    <property type="entry name" value="type_I_hlyD"/>
    <property type="match status" value="1"/>
</dbReference>
<dbReference type="PANTHER" id="PTHR30386:SF27">
    <property type="entry name" value="MEMBRANE FUSION PROTEIN (MFP) FAMILY PROTEIN"/>
    <property type="match status" value="1"/>
</dbReference>
<dbReference type="PANTHER" id="PTHR30386">
    <property type="entry name" value="MEMBRANE FUSION SUBUNIT OF EMRAB-TOLC MULTIDRUG EFFLUX PUMP"/>
    <property type="match status" value="1"/>
</dbReference>
<dbReference type="Pfam" id="PF13437">
    <property type="entry name" value="HlyD_3"/>
    <property type="match status" value="1"/>
</dbReference>
<dbReference type="PRINTS" id="PR01490">
    <property type="entry name" value="RTXTOXIND"/>
</dbReference>
<dbReference type="PROSITE" id="PS00543">
    <property type="entry name" value="HLYD_FAMILY"/>
    <property type="match status" value="1"/>
</dbReference>
<keyword id="KW-0997">Cell inner membrane</keyword>
<keyword id="KW-1003">Cell membrane</keyword>
<keyword id="KW-0204">Cytolysis</keyword>
<keyword id="KW-0354">Hemolysis</keyword>
<keyword id="KW-0472">Membrane</keyword>
<keyword id="KW-1185">Reference proteome</keyword>
<keyword id="KW-0812">Transmembrane</keyword>
<keyword id="KW-1133">Transmembrane helix</keyword>
<keyword id="KW-0813">Transport</keyword>
<sequence>MRRALRELAARHGRVLAASWRQRHRRPAGWFDPVETEFLPSALSLQERPISPTARWLARILMALAAGALVWSVVGKTEIVVHAAGKVVPVGQSKIIAASETGRVARVLVADNSRVAAGDVLLRLDAGVTEAEERKWRVQAAQARQDEARSRAMIRALDTGRAPVLAELPADPGMMAAQSYLDSQYADYQAQLRSIEAAIATYRRELGLVTQIAHAHRGLRRDGDVSQQAYLEKEQARMTLEGRLRQSEAQRAALQTQTRRQAFETLVLARKLAAQAEQEIARTSAQRSRLVLTAPVDGVVQQLVALTEGTAVAATQPLMMVVPSGAGIQVQAQLDSKDIGFVRAGAPATVKVGAYDYTKYGTLEGKVLYVSPDTVVDDRQQHSYRVTIALAHPALEVDGKPRLLKEGMAVQADIRTGSRRLIEYLLSPVARHAGESLGER</sequence>
<evidence type="ECO:0000250" key="1"/>
<evidence type="ECO:0000255" key="2"/>
<evidence type="ECO:0000305" key="3"/>
<accession>P0DKX9</accession>
<accession>P11091</accession>
<feature type="chain" id="PRO_0000201866" description="Protein CyaD">
    <location>
        <begin position="1"/>
        <end position="440"/>
    </location>
</feature>
<feature type="topological domain" description="Cytoplasmic" evidence="2">
    <location>
        <begin position="1"/>
        <end position="55"/>
    </location>
</feature>
<feature type="transmembrane region" description="Helical" evidence="2">
    <location>
        <begin position="56"/>
        <end position="75"/>
    </location>
</feature>
<feature type="topological domain" description="Periplasmic" evidence="2">
    <location>
        <begin position="76"/>
        <end position="440"/>
    </location>
</feature>
<proteinExistence type="inferred from homology"/>
<comment type="function">
    <text evidence="1">CyaD is necessary for transport of calmodulin-sensitive adenylate cyclase-hemolysin (cyclolysin).</text>
</comment>
<comment type="subcellular location">
    <subcellularLocation>
        <location evidence="3">Cell inner membrane</location>
        <topology evidence="3">Single-pass membrane protein</topology>
    </subcellularLocation>
</comment>
<comment type="similarity">
    <text evidence="3">Belongs to the membrane fusion protein (MFP) (TC 8.A.1) family.</text>
</comment>
<gene>
    <name type="primary">cyaD</name>
    <name type="ordered locus">BP0762</name>
</gene>
<name>CYAD_BORPE</name>
<protein>
    <recommendedName>
        <fullName>Protein CyaD</fullName>
    </recommendedName>
</protein>
<reference key="1">
    <citation type="journal article" date="2003" name="Nat. Genet.">
        <title>Comparative analysis of the genome sequences of Bordetella pertussis, Bordetella parapertussis and Bordetella bronchiseptica.</title>
        <authorList>
            <person name="Parkhill J."/>
            <person name="Sebaihia M."/>
            <person name="Preston A."/>
            <person name="Murphy L.D."/>
            <person name="Thomson N.R."/>
            <person name="Harris D.E."/>
            <person name="Holden M.T.G."/>
            <person name="Churcher C.M."/>
            <person name="Bentley S.D."/>
            <person name="Mungall K.L."/>
            <person name="Cerdeno-Tarraga A.-M."/>
            <person name="Temple L."/>
            <person name="James K.D."/>
            <person name="Harris B."/>
            <person name="Quail M.A."/>
            <person name="Achtman M."/>
            <person name="Atkin R."/>
            <person name="Baker S."/>
            <person name="Basham D."/>
            <person name="Bason N."/>
            <person name="Cherevach I."/>
            <person name="Chillingworth T."/>
            <person name="Collins M."/>
            <person name="Cronin A."/>
            <person name="Davis P."/>
            <person name="Doggett J."/>
            <person name="Feltwell T."/>
            <person name="Goble A."/>
            <person name="Hamlin N."/>
            <person name="Hauser H."/>
            <person name="Holroyd S."/>
            <person name="Jagels K."/>
            <person name="Leather S."/>
            <person name="Moule S."/>
            <person name="Norberczak H."/>
            <person name="O'Neil S."/>
            <person name="Ormond D."/>
            <person name="Price C."/>
            <person name="Rabbinowitsch E."/>
            <person name="Rutter S."/>
            <person name="Sanders M."/>
            <person name="Saunders D."/>
            <person name="Seeger K."/>
            <person name="Sharp S."/>
            <person name="Simmonds M."/>
            <person name="Skelton J."/>
            <person name="Squares R."/>
            <person name="Squares S."/>
            <person name="Stevens K."/>
            <person name="Unwin L."/>
            <person name="Whitehead S."/>
            <person name="Barrell B.G."/>
            <person name="Maskell D.J."/>
        </authorList>
    </citation>
    <scope>NUCLEOTIDE SEQUENCE [LARGE SCALE GENOMIC DNA]</scope>
    <source>
        <strain>Tohama I / ATCC BAA-589 / NCTC 13251</strain>
    </source>
</reference>